<keyword id="KW-0002">3D-structure</keyword>
<keyword id="KW-1203">Blood coagulation cascade inhibiting toxin</keyword>
<keyword id="KW-0106">Calcium</keyword>
<keyword id="KW-1015">Disulfide bond</keyword>
<keyword id="KW-1199">Hemostasis impairing toxin</keyword>
<keyword id="KW-0378">Hydrolase</keyword>
<keyword id="KW-0442">Lipid degradation</keyword>
<keyword id="KW-0443">Lipid metabolism</keyword>
<keyword id="KW-0479">Metal-binding</keyword>
<keyword id="KW-0964">Secreted</keyword>
<keyword id="KW-0732">Signal</keyword>
<keyword id="KW-0800">Toxin</keyword>
<sequence length="138" mass="15614">MRALWIVAVLLLGVEGSLLQFRKMIKKMTGKEPVVSYAFYGCYCGSGGRGKPKDATDRCCFVHDCCYEKLTGCDPKWDDYTYSWKNGTIVCGGDDPCKKEVCECDKAAAICFRDNLKTYKKRYMTYPNILCSSKSEKC</sequence>
<comment type="function">
    <text evidence="5 6">Snake venom phospholipase A2 (PLA2) that shows potent hemolytic activity, and exhibits medium anticoagulant effects by binding to factor Xa (F10) and inhibiting the prothrombinase activity (IC(50) is 90 nM). It is one of the few phospholipases A2 capable of hydrolyzing the phospholipids of E.coli membranes in the presence of a bactericidal/permeability-increasing protein (BPI) of neutrophils. PLA2 catalyzes the calcium-dependent hydrolysis of the 2-acyl groups in 3-sn-phosphoglycerides.</text>
</comment>
<comment type="catalytic activity">
    <reaction evidence="3 4">
        <text>a 1,2-diacyl-sn-glycero-3-phosphocholine + H2O = a 1-acyl-sn-glycero-3-phosphocholine + a fatty acid + H(+)</text>
        <dbReference type="Rhea" id="RHEA:15801"/>
        <dbReference type="ChEBI" id="CHEBI:15377"/>
        <dbReference type="ChEBI" id="CHEBI:15378"/>
        <dbReference type="ChEBI" id="CHEBI:28868"/>
        <dbReference type="ChEBI" id="CHEBI:57643"/>
        <dbReference type="ChEBI" id="CHEBI:58168"/>
        <dbReference type="EC" id="3.1.1.4"/>
    </reaction>
</comment>
<comment type="cofactor">
    <cofactor evidence="9">
        <name>Ca(2+)</name>
        <dbReference type="ChEBI" id="CHEBI:29108"/>
    </cofactor>
    <text evidence="9">Binds 1 Ca(2+) ion.</text>
</comment>
<comment type="subcellular location">
    <subcellularLocation>
        <location>Secreted</location>
    </subcellularLocation>
</comment>
<comment type="tissue specificity">
    <text>Expressed by the venom gland.</text>
</comment>
<comment type="similarity">
    <text evidence="8">Belongs to the phospholipase A2 family. Group II subfamily. D49 sub-subfamily.</text>
</comment>
<feature type="signal peptide" evidence="1">
    <location>
        <begin position="1"/>
        <end position="16"/>
    </location>
</feature>
<feature type="chain" id="PRO_0000022776" description="Basic phospholipase A2 B">
    <location>
        <begin position="17"/>
        <end position="138"/>
    </location>
</feature>
<feature type="active site" evidence="2">
    <location>
        <position position="63"/>
    </location>
</feature>
<feature type="active site" evidence="2">
    <location>
        <position position="105"/>
    </location>
</feature>
<feature type="binding site" evidence="7 11">
    <location>
        <position position="43"/>
    </location>
    <ligand>
        <name>Ca(2+)</name>
        <dbReference type="ChEBI" id="CHEBI:29108"/>
    </ligand>
</feature>
<feature type="binding site" evidence="7 11">
    <location>
        <position position="45"/>
    </location>
    <ligand>
        <name>Ca(2+)</name>
        <dbReference type="ChEBI" id="CHEBI:29108"/>
    </ligand>
</feature>
<feature type="binding site" evidence="7 11">
    <location>
        <position position="47"/>
    </location>
    <ligand>
        <name>Ca(2+)</name>
        <dbReference type="ChEBI" id="CHEBI:29108"/>
    </ligand>
</feature>
<feature type="binding site" evidence="7 11">
    <location>
        <position position="64"/>
    </location>
    <ligand>
        <name>Ca(2+)</name>
        <dbReference type="ChEBI" id="CHEBI:29108"/>
    </ligand>
</feature>
<feature type="disulfide bond" evidence="5 7 10 11">
    <location>
        <begin position="42"/>
        <end position="131"/>
    </location>
</feature>
<feature type="disulfide bond" evidence="5 7 10 11">
    <location>
        <begin position="44"/>
        <end position="60"/>
    </location>
</feature>
<feature type="disulfide bond" evidence="5 7 10 11">
    <location>
        <begin position="59"/>
        <end position="111"/>
    </location>
</feature>
<feature type="disulfide bond" evidence="5 7 10 11">
    <location>
        <begin position="65"/>
        <end position="138"/>
    </location>
</feature>
<feature type="disulfide bond" evidence="5 7 10 11">
    <location>
        <begin position="66"/>
        <end position="104"/>
    </location>
</feature>
<feature type="disulfide bond" evidence="5 7 10 11">
    <location>
        <begin position="73"/>
        <end position="97"/>
    </location>
</feature>
<feature type="disulfide bond" evidence="5 7 10 11">
    <location>
        <begin position="91"/>
        <end position="102"/>
    </location>
</feature>
<feature type="helix" evidence="12">
    <location>
        <begin position="18"/>
        <end position="29"/>
    </location>
</feature>
<feature type="helix" evidence="12">
    <location>
        <begin position="33"/>
        <end position="36"/>
    </location>
</feature>
<feature type="turn" evidence="12">
    <location>
        <begin position="37"/>
        <end position="39"/>
    </location>
</feature>
<feature type="turn" evidence="12">
    <location>
        <begin position="41"/>
        <end position="43"/>
    </location>
</feature>
<feature type="strand" evidence="12">
    <location>
        <begin position="44"/>
        <end position="46"/>
    </location>
</feature>
<feature type="helix" evidence="12">
    <location>
        <begin position="55"/>
        <end position="69"/>
    </location>
</feature>
<feature type="turn" evidence="12">
    <location>
        <begin position="75"/>
        <end position="77"/>
    </location>
</feature>
<feature type="strand" evidence="12">
    <location>
        <begin position="82"/>
        <end position="85"/>
    </location>
</feature>
<feature type="strand" evidence="12">
    <location>
        <begin position="88"/>
        <end position="91"/>
    </location>
</feature>
<feature type="helix" evidence="12">
    <location>
        <begin position="96"/>
        <end position="114"/>
    </location>
</feature>
<feature type="helix" evidence="12">
    <location>
        <begin position="116"/>
        <end position="118"/>
    </location>
</feature>
<feature type="helix" evidence="12">
    <location>
        <begin position="121"/>
        <end position="123"/>
    </location>
</feature>
<feature type="helix" evidence="12">
    <location>
        <begin position="128"/>
        <end position="130"/>
    </location>
</feature>
<reference key="1">
    <citation type="journal article" date="1996" name="Sheng Wu Hua Xue Yu Sheng Wu Wu Li Xue Bao">
        <title>Cloning of the BPLA(2) gene from Agkistrodon halys pallas.</title>
        <authorList>
            <person name="Pan H."/>
            <person name="Ou-Yang L.-L."/>
            <person name="Yang G.-Z."/>
            <person name="Zhou Y.-C."/>
            <person name="Wu X.-F."/>
        </authorList>
    </citation>
    <scope>NUCLEOTIDE SEQUENCE [MRNA]</scope>
    <source>
        <tissue>Venom gland</tissue>
    </source>
</reference>
<reference key="2">
    <citation type="journal article" date="1998" name="Toxicon">
        <title>Diversity of cDNAs encoding phospholipase A2 from Agkistrodon halys pallas venom, and its expression in E. coli.</title>
        <authorList>
            <person name="Pan H."/>
            <person name="Liu X.-L."/>
            <person name="Ou-Yang L.-L."/>
            <person name="Yang G.-Z."/>
            <person name="Zhou Y.-C."/>
            <person name="Li Z.-P."/>
            <person name="Wu X.-F."/>
        </authorList>
    </citation>
    <scope>NUCLEOTIDE SEQUENCE [MRNA]</scope>
    <source>
        <tissue>Venom gland</tissue>
    </source>
</reference>
<reference key="3">
    <citation type="journal article" date="2007" name="BMC Struct. Biol.">
        <title>Characterization of a human coagulation factor Xa-binding site on Viperidae snake venom phospholipases A2 by affinity binding studies and molecular bioinformatics.</title>
        <authorList>
            <person name="Faure G."/>
            <person name="Gowda V.T."/>
            <person name="Maroun R.C."/>
        </authorList>
    </citation>
    <scope>FUNCTION AS AN ANTICOAGULANT</scope>
</reference>
<reference key="4">
    <citation type="journal article" date="1998" name="Acta Crystallogr. D">
        <title>Structure of a basic phospholipase A2 from Agkistrodon halys pallas at 2.13 A resolution.</title>
        <authorList>
            <person name="Zhao K."/>
            <person name="Song S."/>
            <person name="Lin Z."/>
            <person name="Zhou Y.-C."/>
        </authorList>
    </citation>
    <scope>X-RAY CRYSTALLOGRAPHY (2.13 ANGSTROMS) OF 18-138 IN COMPLEX WITH CALCIUM ION</scope>
    <scope>COFACTOR</scope>
    <scope>DISULFIDE BONDS</scope>
    <source>
        <tissue>Venom</tissue>
    </source>
</reference>
<reference key="5">
    <citation type="journal article" date="2000" name="Toxicon">
        <title>Structure of basic phospholipase A2 from Agkistrodon halys pallas: implications for its association, hemolytic and anticoagulant activities.</title>
        <authorList>
            <person name="Zhao K."/>
            <person name="Zhou Y.-C."/>
            <person name="Lin Z."/>
        </authorList>
    </citation>
    <scope>X-RAY CRYSTALLOGRAPHY (2.6 ANGSTROMS) OF 18-138</scope>
    <scope>FUNCTION</scope>
    <scope>DISULFIDE BONDS</scope>
    <source>
        <tissue>Venom</tissue>
    </source>
</reference>
<dbReference type="EC" id="3.1.1.4"/>
<dbReference type="EMBL" id="AF015242">
    <property type="protein sequence ID" value="AAB71844.1"/>
    <property type="molecule type" value="mRNA"/>
</dbReference>
<dbReference type="PIR" id="JC1342">
    <property type="entry name" value="JC1342"/>
</dbReference>
<dbReference type="PDB" id="1B4W">
    <property type="method" value="X-ray"/>
    <property type="resolution" value="2.60 A"/>
    <property type="chains" value="A/B/C/D=17-138"/>
</dbReference>
<dbReference type="PDB" id="1C1J">
    <property type="method" value="X-ray"/>
    <property type="resolution" value="2.80 A"/>
    <property type="chains" value="A/B/C/D=18-138"/>
</dbReference>
<dbReference type="PDB" id="1JIA">
    <property type="method" value="X-ray"/>
    <property type="resolution" value="2.13 A"/>
    <property type="chains" value="A/B=18-138"/>
</dbReference>
<dbReference type="PDB" id="4HG9">
    <property type="method" value="X-ray"/>
    <property type="resolution" value="1.60 A"/>
    <property type="chains" value="A/B/C/D=18-138"/>
</dbReference>
<dbReference type="PDBsum" id="1B4W"/>
<dbReference type="PDBsum" id="1C1J"/>
<dbReference type="PDBsum" id="1JIA"/>
<dbReference type="PDBsum" id="4HG9"/>
<dbReference type="SMR" id="O42187"/>
<dbReference type="EvolutionaryTrace" id="O42187"/>
<dbReference type="GO" id="GO:0005576">
    <property type="term" value="C:extracellular region"/>
    <property type="evidence" value="ECO:0007669"/>
    <property type="project" value="UniProtKB-SubCell"/>
</dbReference>
<dbReference type="GO" id="GO:0005509">
    <property type="term" value="F:calcium ion binding"/>
    <property type="evidence" value="ECO:0007669"/>
    <property type="project" value="InterPro"/>
</dbReference>
<dbReference type="GO" id="GO:0047498">
    <property type="term" value="F:calcium-dependent phospholipase A2 activity"/>
    <property type="evidence" value="ECO:0007669"/>
    <property type="project" value="TreeGrafter"/>
</dbReference>
<dbReference type="GO" id="GO:0005543">
    <property type="term" value="F:phospholipid binding"/>
    <property type="evidence" value="ECO:0007669"/>
    <property type="project" value="TreeGrafter"/>
</dbReference>
<dbReference type="GO" id="GO:0090729">
    <property type="term" value="F:toxin activity"/>
    <property type="evidence" value="ECO:0007669"/>
    <property type="project" value="UniProtKB-KW"/>
</dbReference>
<dbReference type="GO" id="GO:0050482">
    <property type="term" value="P:arachidonate secretion"/>
    <property type="evidence" value="ECO:0007669"/>
    <property type="project" value="InterPro"/>
</dbReference>
<dbReference type="GO" id="GO:0016042">
    <property type="term" value="P:lipid catabolic process"/>
    <property type="evidence" value="ECO:0007669"/>
    <property type="project" value="UniProtKB-KW"/>
</dbReference>
<dbReference type="GO" id="GO:0042130">
    <property type="term" value="P:negative regulation of T cell proliferation"/>
    <property type="evidence" value="ECO:0007669"/>
    <property type="project" value="TreeGrafter"/>
</dbReference>
<dbReference type="GO" id="GO:0006644">
    <property type="term" value="P:phospholipid metabolic process"/>
    <property type="evidence" value="ECO:0007669"/>
    <property type="project" value="InterPro"/>
</dbReference>
<dbReference type="CDD" id="cd00125">
    <property type="entry name" value="PLA2c"/>
    <property type="match status" value="1"/>
</dbReference>
<dbReference type="FunFam" id="1.20.90.10:FF:000001">
    <property type="entry name" value="Basic phospholipase A2 homolog"/>
    <property type="match status" value="1"/>
</dbReference>
<dbReference type="Gene3D" id="1.20.90.10">
    <property type="entry name" value="Phospholipase A2 domain"/>
    <property type="match status" value="1"/>
</dbReference>
<dbReference type="InterPro" id="IPR001211">
    <property type="entry name" value="PLipase_A2"/>
</dbReference>
<dbReference type="InterPro" id="IPR033112">
    <property type="entry name" value="PLipase_A2_Asp_AS"/>
</dbReference>
<dbReference type="InterPro" id="IPR016090">
    <property type="entry name" value="PLipase_A2_dom"/>
</dbReference>
<dbReference type="InterPro" id="IPR036444">
    <property type="entry name" value="PLipase_A2_dom_sf"/>
</dbReference>
<dbReference type="InterPro" id="IPR033113">
    <property type="entry name" value="PLipase_A2_His_AS"/>
</dbReference>
<dbReference type="PANTHER" id="PTHR11716">
    <property type="entry name" value="PHOSPHOLIPASE A2 FAMILY MEMBER"/>
    <property type="match status" value="1"/>
</dbReference>
<dbReference type="PANTHER" id="PTHR11716:SF9">
    <property type="entry name" value="PHOSPHOLIPASE A2, MEMBRANE ASSOCIATED"/>
    <property type="match status" value="1"/>
</dbReference>
<dbReference type="Pfam" id="PF00068">
    <property type="entry name" value="Phospholip_A2_1"/>
    <property type="match status" value="1"/>
</dbReference>
<dbReference type="PRINTS" id="PR00389">
    <property type="entry name" value="PHPHLIPASEA2"/>
</dbReference>
<dbReference type="SMART" id="SM00085">
    <property type="entry name" value="PA2c"/>
    <property type="match status" value="1"/>
</dbReference>
<dbReference type="SUPFAM" id="SSF48619">
    <property type="entry name" value="Phospholipase A2, PLA2"/>
    <property type="match status" value="1"/>
</dbReference>
<dbReference type="PROSITE" id="PS00119">
    <property type="entry name" value="PA2_ASP"/>
    <property type="match status" value="1"/>
</dbReference>
<dbReference type="PROSITE" id="PS00118">
    <property type="entry name" value="PA2_HIS"/>
    <property type="match status" value="1"/>
</dbReference>
<protein>
    <recommendedName>
        <fullName>Basic phospholipase A2 B</fullName>
        <shortName>svPLA2</shortName>
        <ecNumber>3.1.1.4</ecNumber>
    </recommendedName>
    <alternativeName>
        <fullName>BPLA(2)</fullName>
    </alternativeName>
    <alternativeName>
        <fullName>Phosphatidylcholine 2-acylhydrolase</fullName>
    </alternativeName>
    <alternativeName>
        <fullName>bAhp</fullName>
    </alternativeName>
</protein>
<accession>O42187</accession>
<name>PA2BB_GLOHA</name>
<evidence type="ECO:0000250" key="1"/>
<evidence type="ECO:0000250" key="2">
    <source>
        <dbReference type="UniProtKB" id="P06859"/>
    </source>
</evidence>
<evidence type="ECO:0000255" key="3">
    <source>
        <dbReference type="PROSITE-ProRule" id="PRU10035"/>
    </source>
</evidence>
<evidence type="ECO:0000255" key="4">
    <source>
        <dbReference type="PROSITE-ProRule" id="PRU10036"/>
    </source>
</evidence>
<evidence type="ECO:0000269" key="5">
    <source>
    </source>
</evidence>
<evidence type="ECO:0000269" key="6">
    <source>
    </source>
</evidence>
<evidence type="ECO:0000269" key="7">
    <source>
    </source>
</evidence>
<evidence type="ECO:0000305" key="8"/>
<evidence type="ECO:0000305" key="9">
    <source>
    </source>
</evidence>
<evidence type="ECO:0007744" key="10">
    <source>
        <dbReference type="PDB" id="1B4W"/>
    </source>
</evidence>
<evidence type="ECO:0007744" key="11">
    <source>
        <dbReference type="PDB" id="1JIA"/>
    </source>
</evidence>
<evidence type="ECO:0007829" key="12">
    <source>
        <dbReference type="PDB" id="4HG9"/>
    </source>
</evidence>
<organism>
    <name type="scientific">Gloydius halys</name>
    <name type="common">Chinese water mocassin</name>
    <name type="synonym">Agkistrodon halys</name>
    <dbReference type="NCBI Taxonomy" id="8714"/>
    <lineage>
        <taxon>Eukaryota</taxon>
        <taxon>Metazoa</taxon>
        <taxon>Chordata</taxon>
        <taxon>Craniata</taxon>
        <taxon>Vertebrata</taxon>
        <taxon>Euteleostomi</taxon>
        <taxon>Lepidosauria</taxon>
        <taxon>Squamata</taxon>
        <taxon>Bifurcata</taxon>
        <taxon>Unidentata</taxon>
        <taxon>Episquamata</taxon>
        <taxon>Toxicofera</taxon>
        <taxon>Serpentes</taxon>
        <taxon>Colubroidea</taxon>
        <taxon>Viperidae</taxon>
        <taxon>Crotalinae</taxon>
        <taxon>Gloydius</taxon>
    </lineage>
</organism>
<proteinExistence type="evidence at protein level"/>